<comment type="interaction">
    <interactant intactId="EBI-17657124">
        <id>Q96E16</id>
    </interactant>
    <interactant intactId="EBI-12092171">
        <id>Q12797-6</id>
        <label>ASPH</label>
    </interactant>
    <organismsDiffer>false</organismsDiffer>
    <experiments>3</experiments>
</comment>
<comment type="interaction">
    <interactant intactId="EBI-17657124">
        <id>Q96E16</id>
    </interactant>
    <interactant intactId="EBI-2515857">
        <id>O43681</id>
        <label>GET3</label>
    </interactant>
    <organismsDiffer>false</organismsDiffer>
    <experiments>3</experiments>
</comment>
<comment type="interaction">
    <interactant intactId="EBI-17657124">
        <id>Q96E16</id>
    </interactant>
    <interactant intactId="EBI-10266796">
        <id>Q8N5M9</id>
        <label>JAGN1</label>
    </interactant>
    <organismsDiffer>false</organismsDiffer>
    <experiments>3</experiments>
</comment>
<comment type="interaction">
    <interactant intactId="EBI-17657124">
        <id>Q96E16</id>
    </interactant>
    <interactant intactId="EBI-741480">
        <id>Q9UMX0</id>
        <label>UBQLN1</label>
    </interactant>
    <organismsDiffer>false</organismsDiffer>
    <experiments>3</experiments>
</comment>
<comment type="interaction">
    <interactant intactId="EBI-17657124">
        <id>Q96E16</id>
    </interactant>
    <interactant intactId="EBI-947187">
        <id>Q9UHD9</id>
        <label>UBQLN2</label>
    </interactant>
    <organismsDiffer>false</organismsDiffer>
    <experiments>3</experiments>
</comment>
<comment type="subcellular location">
    <subcellularLocation>
        <location evidence="2">Membrane</location>
        <topology evidence="2">Single-pass membrane protein</topology>
    </subcellularLocation>
</comment>
<comment type="similarity">
    <text evidence="2">Belongs to the SMIM19 family.</text>
</comment>
<comment type="sequence caution" evidence="2">
    <conflict type="erroneous initiation">
        <sequence resource="EMBL-CDS" id="AAH13035"/>
    </conflict>
    <text>Truncated N-terminus.</text>
</comment>
<comment type="sequence caution" evidence="2">
    <conflict type="erroneous initiation">
        <sequence resource="EMBL-CDS" id="BAG34873"/>
    </conflict>
    <text>Truncated N-terminus.</text>
</comment>
<name>SMI19_HUMAN</name>
<sequence>MAGGYGVMGDDGSIDYTVHEAWNEATNVYLIVILVSFGLFMYAKRNKRRIMRIFSVPPTEETLSEPNFYDTISKIRLRQQLEMYSISRKYDYQQPQNQADSVQLSLE</sequence>
<dbReference type="EMBL" id="AK311932">
    <property type="protein sequence ID" value="BAG34873.1"/>
    <property type="status" value="ALT_INIT"/>
    <property type="molecule type" value="mRNA"/>
</dbReference>
<dbReference type="EMBL" id="AC090739">
    <property type="status" value="NOT_ANNOTATED_CDS"/>
    <property type="molecule type" value="Genomic_DNA"/>
</dbReference>
<dbReference type="EMBL" id="CH471080">
    <property type="protein sequence ID" value="EAW63211.1"/>
    <property type="molecule type" value="Genomic_DNA"/>
</dbReference>
<dbReference type="EMBL" id="CH471080">
    <property type="protein sequence ID" value="EAW63212.1"/>
    <property type="molecule type" value="Genomic_DNA"/>
</dbReference>
<dbReference type="EMBL" id="BC013035">
    <property type="protein sequence ID" value="AAH13035.1"/>
    <property type="status" value="ALT_INIT"/>
    <property type="molecule type" value="mRNA"/>
</dbReference>
<dbReference type="CCDS" id="CCDS6133.2"/>
<dbReference type="RefSeq" id="NP_001129146.1">
    <property type="nucleotide sequence ID" value="NM_001135674.2"/>
</dbReference>
<dbReference type="RefSeq" id="NP_001129147.1">
    <property type="nucleotide sequence ID" value="NM_001135675.2"/>
</dbReference>
<dbReference type="RefSeq" id="NP_001129148.1">
    <property type="nucleotide sequence ID" value="NM_001135676.2"/>
</dbReference>
<dbReference type="RefSeq" id="NP_612445.2">
    <property type="nucleotide sequence ID" value="NM_138436.4"/>
</dbReference>
<dbReference type="BioGRID" id="125398">
    <property type="interactions" value="6"/>
</dbReference>
<dbReference type="FunCoup" id="Q96E16">
    <property type="interactions" value="161"/>
</dbReference>
<dbReference type="IntAct" id="Q96E16">
    <property type="interactions" value="5"/>
</dbReference>
<dbReference type="STRING" id="9606.ENSP00000391549"/>
<dbReference type="iPTMnet" id="Q96E16"/>
<dbReference type="PhosphoSitePlus" id="Q96E16"/>
<dbReference type="BioMuta" id="SMIM19"/>
<dbReference type="DMDM" id="294862418"/>
<dbReference type="jPOST" id="Q96E16"/>
<dbReference type="MassIVE" id="Q96E16"/>
<dbReference type="PaxDb" id="9606-ENSP00000391549"/>
<dbReference type="PeptideAtlas" id="Q96E16"/>
<dbReference type="ProteomicsDB" id="76364"/>
<dbReference type="Pumba" id="Q96E16"/>
<dbReference type="Antibodypedia" id="2641">
    <property type="antibodies" value="66 antibodies from 11 providers"/>
</dbReference>
<dbReference type="DNASU" id="114926"/>
<dbReference type="Ensembl" id="ENST00000414154.6">
    <property type="protein sequence ID" value="ENSP00000408997.2"/>
    <property type="gene ID" value="ENSG00000176209.12"/>
</dbReference>
<dbReference type="Ensembl" id="ENST00000416469.6">
    <property type="protein sequence ID" value="ENSP00000390750.2"/>
    <property type="gene ID" value="ENSG00000176209.12"/>
</dbReference>
<dbReference type="Ensembl" id="ENST00000417410.7">
    <property type="protein sequence ID" value="ENSP00000405694.2"/>
    <property type="gene ID" value="ENSG00000176209.12"/>
</dbReference>
<dbReference type="Ensembl" id="ENST00000438528.7">
    <property type="protein sequence ID" value="ENSP00000391549.2"/>
    <property type="gene ID" value="ENSG00000176209.12"/>
</dbReference>
<dbReference type="Ensembl" id="ENST00000490331.2">
    <property type="protein sequence ID" value="ENSP00000429586.1"/>
    <property type="gene ID" value="ENSG00000176209.12"/>
</dbReference>
<dbReference type="GeneID" id="114926"/>
<dbReference type="KEGG" id="hsa:114926"/>
<dbReference type="MANE-Select" id="ENST00000417410.7">
    <property type="protein sequence ID" value="ENSP00000405694.2"/>
    <property type="RefSeq nucleotide sequence ID" value="NM_001135674.2"/>
    <property type="RefSeq protein sequence ID" value="NP_001129146.1"/>
</dbReference>
<dbReference type="UCSC" id="uc003xpg.4">
    <property type="organism name" value="human"/>
</dbReference>
<dbReference type="AGR" id="HGNC:25166"/>
<dbReference type="CTD" id="114926"/>
<dbReference type="DisGeNET" id="114926"/>
<dbReference type="GeneCards" id="SMIM19"/>
<dbReference type="HGNC" id="HGNC:25166">
    <property type="gene designation" value="SMIM19"/>
</dbReference>
<dbReference type="HPA" id="ENSG00000176209">
    <property type="expression patterns" value="Low tissue specificity"/>
</dbReference>
<dbReference type="neXtProt" id="NX_Q96E16"/>
<dbReference type="OpenTargets" id="ENSG00000176209"/>
<dbReference type="PharmGKB" id="PA142672359"/>
<dbReference type="VEuPathDB" id="HostDB:ENSG00000176209"/>
<dbReference type="eggNOG" id="ENOG502S18T">
    <property type="taxonomic scope" value="Eukaryota"/>
</dbReference>
<dbReference type="GeneTree" id="ENSGT00390000000436"/>
<dbReference type="HOGENOM" id="CLU_172229_0_0_1"/>
<dbReference type="InParanoid" id="Q96E16"/>
<dbReference type="OMA" id="KYECQQP"/>
<dbReference type="OrthoDB" id="8663985at2759"/>
<dbReference type="PAN-GO" id="Q96E16">
    <property type="GO annotations" value="0 GO annotations based on evolutionary models"/>
</dbReference>
<dbReference type="PhylomeDB" id="Q96E16"/>
<dbReference type="TreeFam" id="TF332548"/>
<dbReference type="PathwayCommons" id="Q96E16"/>
<dbReference type="SignaLink" id="Q96E16"/>
<dbReference type="BioGRID-ORCS" id="114926">
    <property type="hits" value="15 hits in 1154 CRISPR screens"/>
</dbReference>
<dbReference type="ChiTaRS" id="SMIM19">
    <property type="organism name" value="human"/>
</dbReference>
<dbReference type="GenomeRNAi" id="114926"/>
<dbReference type="Pharos" id="Q96E16">
    <property type="development level" value="Tdark"/>
</dbReference>
<dbReference type="PRO" id="PR:Q96E16"/>
<dbReference type="Proteomes" id="UP000005640">
    <property type="component" value="Chromosome 8"/>
</dbReference>
<dbReference type="RNAct" id="Q96E16">
    <property type="molecule type" value="protein"/>
</dbReference>
<dbReference type="Bgee" id="ENSG00000176209">
    <property type="expression patterns" value="Expressed in parotid gland and 187 other cell types or tissues"/>
</dbReference>
<dbReference type="ExpressionAtlas" id="Q96E16">
    <property type="expression patterns" value="baseline and differential"/>
</dbReference>
<dbReference type="GO" id="GO:0016020">
    <property type="term" value="C:membrane"/>
    <property type="evidence" value="ECO:0007669"/>
    <property type="project" value="UniProtKB-SubCell"/>
</dbReference>
<dbReference type="InterPro" id="IPR029368">
    <property type="entry name" value="SMIM19"/>
</dbReference>
<dbReference type="PANTHER" id="PTHR31888">
    <property type="entry name" value="SMALL INTEGRAL MEMBRANE PROTEIN 19"/>
    <property type="match status" value="1"/>
</dbReference>
<dbReference type="PANTHER" id="PTHR31888:SF1">
    <property type="entry name" value="SMALL INTEGRAL MEMBRANE PROTEIN 19"/>
    <property type="match status" value="1"/>
</dbReference>
<dbReference type="Pfam" id="PF15117">
    <property type="entry name" value="UPF0697"/>
    <property type="match status" value="1"/>
</dbReference>
<feature type="chain" id="PRO_0000264626" description="Small integral membrane protein 19">
    <location>
        <begin position="1"/>
        <end position="107"/>
    </location>
</feature>
<feature type="transmembrane region" description="Helical" evidence="1">
    <location>
        <begin position="25"/>
        <end position="43"/>
    </location>
</feature>
<protein>
    <recommendedName>
        <fullName>Small integral membrane protein 19</fullName>
    </recommendedName>
</protein>
<reference key="1">
    <citation type="journal article" date="2004" name="Nat. Genet.">
        <title>Complete sequencing and characterization of 21,243 full-length human cDNAs.</title>
        <authorList>
            <person name="Ota T."/>
            <person name="Suzuki Y."/>
            <person name="Nishikawa T."/>
            <person name="Otsuki T."/>
            <person name="Sugiyama T."/>
            <person name="Irie R."/>
            <person name="Wakamatsu A."/>
            <person name="Hayashi K."/>
            <person name="Sato H."/>
            <person name="Nagai K."/>
            <person name="Kimura K."/>
            <person name="Makita H."/>
            <person name="Sekine M."/>
            <person name="Obayashi M."/>
            <person name="Nishi T."/>
            <person name="Shibahara T."/>
            <person name="Tanaka T."/>
            <person name="Ishii S."/>
            <person name="Yamamoto J."/>
            <person name="Saito K."/>
            <person name="Kawai Y."/>
            <person name="Isono Y."/>
            <person name="Nakamura Y."/>
            <person name="Nagahari K."/>
            <person name="Murakami K."/>
            <person name="Yasuda T."/>
            <person name="Iwayanagi T."/>
            <person name="Wagatsuma M."/>
            <person name="Shiratori A."/>
            <person name="Sudo H."/>
            <person name="Hosoiri T."/>
            <person name="Kaku Y."/>
            <person name="Kodaira H."/>
            <person name="Kondo H."/>
            <person name="Sugawara M."/>
            <person name="Takahashi M."/>
            <person name="Kanda K."/>
            <person name="Yokoi T."/>
            <person name="Furuya T."/>
            <person name="Kikkawa E."/>
            <person name="Omura Y."/>
            <person name="Abe K."/>
            <person name="Kamihara K."/>
            <person name="Katsuta N."/>
            <person name="Sato K."/>
            <person name="Tanikawa M."/>
            <person name="Yamazaki M."/>
            <person name="Ninomiya K."/>
            <person name="Ishibashi T."/>
            <person name="Yamashita H."/>
            <person name="Murakawa K."/>
            <person name="Fujimori K."/>
            <person name="Tanai H."/>
            <person name="Kimata M."/>
            <person name="Watanabe M."/>
            <person name="Hiraoka S."/>
            <person name="Chiba Y."/>
            <person name="Ishida S."/>
            <person name="Ono Y."/>
            <person name="Takiguchi S."/>
            <person name="Watanabe S."/>
            <person name="Yosida M."/>
            <person name="Hotuta T."/>
            <person name="Kusano J."/>
            <person name="Kanehori K."/>
            <person name="Takahashi-Fujii A."/>
            <person name="Hara H."/>
            <person name="Tanase T.-O."/>
            <person name="Nomura Y."/>
            <person name="Togiya S."/>
            <person name="Komai F."/>
            <person name="Hara R."/>
            <person name="Takeuchi K."/>
            <person name="Arita M."/>
            <person name="Imose N."/>
            <person name="Musashino K."/>
            <person name="Yuuki H."/>
            <person name="Oshima A."/>
            <person name="Sasaki N."/>
            <person name="Aotsuka S."/>
            <person name="Yoshikawa Y."/>
            <person name="Matsunawa H."/>
            <person name="Ichihara T."/>
            <person name="Shiohata N."/>
            <person name="Sano S."/>
            <person name="Moriya S."/>
            <person name="Momiyama H."/>
            <person name="Satoh N."/>
            <person name="Takami S."/>
            <person name="Terashima Y."/>
            <person name="Suzuki O."/>
            <person name="Nakagawa S."/>
            <person name="Senoh A."/>
            <person name="Mizoguchi H."/>
            <person name="Goto Y."/>
            <person name="Shimizu F."/>
            <person name="Wakebe H."/>
            <person name="Hishigaki H."/>
            <person name="Watanabe T."/>
            <person name="Sugiyama A."/>
            <person name="Takemoto M."/>
            <person name="Kawakami B."/>
            <person name="Yamazaki M."/>
            <person name="Watanabe K."/>
            <person name="Kumagai A."/>
            <person name="Itakura S."/>
            <person name="Fukuzumi Y."/>
            <person name="Fujimori Y."/>
            <person name="Komiyama M."/>
            <person name="Tashiro H."/>
            <person name="Tanigami A."/>
            <person name="Fujiwara T."/>
            <person name="Ono T."/>
            <person name="Yamada K."/>
            <person name="Fujii Y."/>
            <person name="Ozaki K."/>
            <person name="Hirao M."/>
            <person name="Ohmori Y."/>
            <person name="Kawabata A."/>
            <person name="Hikiji T."/>
            <person name="Kobatake N."/>
            <person name="Inagaki H."/>
            <person name="Ikema Y."/>
            <person name="Okamoto S."/>
            <person name="Okitani R."/>
            <person name="Kawakami T."/>
            <person name="Noguchi S."/>
            <person name="Itoh T."/>
            <person name="Shigeta K."/>
            <person name="Senba T."/>
            <person name="Matsumura K."/>
            <person name="Nakajima Y."/>
            <person name="Mizuno T."/>
            <person name="Morinaga M."/>
            <person name="Sasaki M."/>
            <person name="Togashi T."/>
            <person name="Oyama M."/>
            <person name="Hata H."/>
            <person name="Watanabe M."/>
            <person name="Komatsu T."/>
            <person name="Mizushima-Sugano J."/>
            <person name="Satoh T."/>
            <person name="Shirai Y."/>
            <person name="Takahashi Y."/>
            <person name="Nakagawa K."/>
            <person name="Okumura K."/>
            <person name="Nagase T."/>
            <person name="Nomura N."/>
            <person name="Kikuchi H."/>
            <person name="Masuho Y."/>
            <person name="Yamashita R."/>
            <person name="Nakai K."/>
            <person name="Yada T."/>
            <person name="Nakamura Y."/>
            <person name="Ohara O."/>
            <person name="Isogai T."/>
            <person name="Sugano S."/>
        </authorList>
    </citation>
    <scope>NUCLEOTIDE SEQUENCE [LARGE SCALE MRNA]</scope>
    <source>
        <tissue>Tongue</tissue>
    </source>
</reference>
<reference key="2">
    <citation type="journal article" date="2006" name="Nature">
        <title>DNA sequence and analysis of human chromosome 8.</title>
        <authorList>
            <person name="Nusbaum C."/>
            <person name="Mikkelsen T.S."/>
            <person name="Zody M.C."/>
            <person name="Asakawa S."/>
            <person name="Taudien S."/>
            <person name="Garber M."/>
            <person name="Kodira C.D."/>
            <person name="Schueler M.G."/>
            <person name="Shimizu A."/>
            <person name="Whittaker C.A."/>
            <person name="Chang J.L."/>
            <person name="Cuomo C.A."/>
            <person name="Dewar K."/>
            <person name="FitzGerald M.G."/>
            <person name="Yang X."/>
            <person name="Allen N.R."/>
            <person name="Anderson S."/>
            <person name="Asakawa T."/>
            <person name="Blechschmidt K."/>
            <person name="Bloom T."/>
            <person name="Borowsky M.L."/>
            <person name="Butler J."/>
            <person name="Cook A."/>
            <person name="Corum B."/>
            <person name="DeArellano K."/>
            <person name="DeCaprio D."/>
            <person name="Dooley K.T."/>
            <person name="Dorris L. III"/>
            <person name="Engels R."/>
            <person name="Gloeckner G."/>
            <person name="Hafez N."/>
            <person name="Hagopian D.S."/>
            <person name="Hall J.L."/>
            <person name="Ishikawa S.K."/>
            <person name="Jaffe D.B."/>
            <person name="Kamat A."/>
            <person name="Kudoh J."/>
            <person name="Lehmann R."/>
            <person name="Lokitsang T."/>
            <person name="Macdonald P."/>
            <person name="Major J.E."/>
            <person name="Matthews C.D."/>
            <person name="Mauceli E."/>
            <person name="Menzel U."/>
            <person name="Mihalev A.H."/>
            <person name="Minoshima S."/>
            <person name="Murayama Y."/>
            <person name="Naylor J.W."/>
            <person name="Nicol R."/>
            <person name="Nguyen C."/>
            <person name="O'Leary S.B."/>
            <person name="O'Neill K."/>
            <person name="Parker S.C.J."/>
            <person name="Polley A."/>
            <person name="Raymond C.K."/>
            <person name="Reichwald K."/>
            <person name="Rodriguez J."/>
            <person name="Sasaki T."/>
            <person name="Schilhabel M."/>
            <person name="Siddiqui R."/>
            <person name="Smith C.L."/>
            <person name="Sneddon T.P."/>
            <person name="Talamas J.A."/>
            <person name="Tenzin P."/>
            <person name="Topham K."/>
            <person name="Venkataraman V."/>
            <person name="Wen G."/>
            <person name="Yamazaki S."/>
            <person name="Young S.K."/>
            <person name="Zeng Q."/>
            <person name="Zimmer A.R."/>
            <person name="Rosenthal A."/>
            <person name="Birren B.W."/>
            <person name="Platzer M."/>
            <person name="Shimizu N."/>
            <person name="Lander E.S."/>
        </authorList>
    </citation>
    <scope>NUCLEOTIDE SEQUENCE [LARGE SCALE GENOMIC DNA]</scope>
</reference>
<reference key="3">
    <citation type="submission" date="2005-09" db="EMBL/GenBank/DDBJ databases">
        <authorList>
            <person name="Mural R.J."/>
            <person name="Istrail S."/>
            <person name="Sutton G.G."/>
            <person name="Florea L."/>
            <person name="Halpern A.L."/>
            <person name="Mobarry C.M."/>
            <person name="Lippert R."/>
            <person name="Walenz B."/>
            <person name="Shatkay H."/>
            <person name="Dew I."/>
            <person name="Miller J.R."/>
            <person name="Flanigan M.J."/>
            <person name="Edwards N.J."/>
            <person name="Bolanos R."/>
            <person name="Fasulo D."/>
            <person name="Halldorsson B.V."/>
            <person name="Hannenhalli S."/>
            <person name="Turner R."/>
            <person name="Yooseph S."/>
            <person name="Lu F."/>
            <person name="Nusskern D.R."/>
            <person name="Shue B.C."/>
            <person name="Zheng X.H."/>
            <person name="Zhong F."/>
            <person name="Delcher A.L."/>
            <person name="Huson D.H."/>
            <person name="Kravitz S.A."/>
            <person name="Mouchard L."/>
            <person name="Reinert K."/>
            <person name="Remington K.A."/>
            <person name="Clark A.G."/>
            <person name="Waterman M.S."/>
            <person name="Eichler E.E."/>
            <person name="Adams M.D."/>
            <person name="Hunkapiller M.W."/>
            <person name="Myers E.W."/>
            <person name="Venter J.C."/>
        </authorList>
    </citation>
    <scope>NUCLEOTIDE SEQUENCE [LARGE SCALE GENOMIC DNA]</scope>
</reference>
<reference key="4">
    <citation type="journal article" date="2004" name="Genome Res.">
        <title>The status, quality, and expansion of the NIH full-length cDNA project: the Mammalian Gene Collection (MGC).</title>
        <authorList>
            <consortium name="The MGC Project Team"/>
        </authorList>
    </citation>
    <scope>NUCLEOTIDE SEQUENCE [LARGE SCALE MRNA]</scope>
    <source>
        <tissue>Lung</tissue>
    </source>
</reference>
<organism>
    <name type="scientific">Homo sapiens</name>
    <name type="common">Human</name>
    <dbReference type="NCBI Taxonomy" id="9606"/>
    <lineage>
        <taxon>Eukaryota</taxon>
        <taxon>Metazoa</taxon>
        <taxon>Chordata</taxon>
        <taxon>Craniata</taxon>
        <taxon>Vertebrata</taxon>
        <taxon>Euteleostomi</taxon>
        <taxon>Mammalia</taxon>
        <taxon>Eutheria</taxon>
        <taxon>Euarchontoglires</taxon>
        <taxon>Primates</taxon>
        <taxon>Haplorrhini</taxon>
        <taxon>Catarrhini</taxon>
        <taxon>Hominidae</taxon>
        <taxon>Homo</taxon>
    </lineage>
</organism>
<accession>Q96E16</accession>
<accession>B2R4S6</accession>
<accession>D3DSY4</accession>
<keyword id="KW-0472">Membrane</keyword>
<keyword id="KW-1267">Proteomics identification</keyword>
<keyword id="KW-1185">Reference proteome</keyword>
<keyword id="KW-0812">Transmembrane</keyword>
<keyword id="KW-1133">Transmembrane helix</keyword>
<evidence type="ECO:0000255" key="1"/>
<evidence type="ECO:0000305" key="2"/>
<proteinExistence type="evidence at protein level"/>
<gene>
    <name type="primary">SMIM19</name>
    <name type="synonym">C8orf40</name>
</gene>